<accession>B0SAF1</accession>
<proteinExistence type="inferred from homology"/>
<dbReference type="EMBL" id="CP000777">
    <property type="protein sequence ID" value="ABZ94414.1"/>
    <property type="molecule type" value="Genomic_DNA"/>
</dbReference>
<dbReference type="RefSeq" id="WP_012388937.1">
    <property type="nucleotide sequence ID" value="NC_010842.1"/>
</dbReference>
<dbReference type="SMR" id="B0SAF1"/>
<dbReference type="KEGG" id="lbf:LBF_1910"/>
<dbReference type="HOGENOM" id="CLU_036235_2_1_12"/>
<dbReference type="GO" id="GO:0015934">
    <property type="term" value="C:large ribosomal subunit"/>
    <property type="evidence" value="ECO:0007669"/>
    <property type="project" value="InterPro"/>
</dbReference>
<dbReference type="GO" id="GO:0019843">
    <property type="term" value="F:rRNA binding"/>
    <property type="evidence" value="ECO:0007669"/>
    <property type="project" value="UniProtKB-UniRule"/>
</dbReference>
<dbReference type="GO" id="GO:0003735">
    <property type="term" value="F:structural constituent of ribosome"/>
    <property type="evidence" value="ECO:0007669"/>
    <property type="project" value="InterPro"/>
</dbReference>
<dbReference type="GO" id="GO:0016740">
    <property type="term" value="F:transferase activity"/>
    <property type="evidence" value="ECO:0007669"/>
    <property type="project" value="InterPro"/>
</dbReference>
<dbReference type="GO" id="GO:0002181">
    <property type="term" value="P:cytoplasmic translation"/>
    <property type="evidence" value="ECO:0007669"/>
    <property type="project" value="TreeGrafter"/>
</dbReference>
<dbReference type="FunFam" id="2.30.30.30:FF:000001">
    <property type="entry name" value="50S ribosomal protein L2"/>
    <property type="match status" value="1"/>
</dbReference>
<dbReference type="FunFam" id="2.40.50.140:FF:000003">
    <property type="entry name" value="50S ribosomal protein L2"/>
    <property type="match status" value="1"/>
</dbReference>
<dbReference type="FunFam" id="4.10.950.10:FF:000001">
    <property type="entry name" value="50S ribosomal protein L2"/>
    <property type="match status" value="1"/>
</dbReference>
<dbReference type="Gene3D" id="2.30.30.30">
    <property type="match status" value="1"/>
</dbReference>
<dbReference type="Gene3D" id="2.40.50.140">
    <property type="entry name" value="Nucleic acid-binding proteins"/>
    <property type="match status" value="1"/>
</dbReference>
<dbReference type="Gene3D" id="4.10.950.10">
    <property type="entry name" value="Ribosomal protein L2, domain 3"/>
    <property type="match status" value="1"/>
</dbReference>
<dbReference type="HAMAP" id="MF_01320_B">
    <property type="entry name" value="Ribosomal_uL2_B"/>
    <property type="match status" value="1"/>
</dbReference>
<dbReference type="InterPro" id="IPR012340">
    <property type="entry name" value="NA-bd_OB-fold"/>
</dbReference>
<dbReference type="InterPro" id="IPR014722">
    <property type="entry name" value="Rib_uL2_dom2"/>
</dbReference>
<dbReference type="InterPro" id="IPR002171">
    <property type="entry name" value="Ribosomal_uL2"/>
</dbReference>
<dbReference type="InterPro" id="IPR005880">
    <property type="entry name" value="Ribosomal_uL2_bac/org-type"/>
</dbReference>
<dbReference type="InterPro" id="IPR022669">
    <property type="entry name" value="Ribosomal_uL2_C"/>
</dbReference>
<dbReference type="InterPro" id="IPR022671">
    <property type="entry name" value="Ribosomal_uL2_CS"/>
</dbReference>
<dbReference type="InterPro" id="IPR014726">
    <property type="entry name" value="Ribosomal_uL2_dom3"/>
</dbReference>
<dbReference type="InterPro" id="IPR022666">
    <property type="entry name" value="Ribosomal_uL2_RNA-bd_dom"/>
</dbReference>
<dbReference type="InterPro" id="IPR008991">
    <property type="entry name" value="Translation_prot_SH3-like_sf"/>
</dbReference>
<dbReference type="NCBIfam" id="TIGR01171">
    <property type="entry name" value="rplB_bact"/>
    <property type="match status" value="1"/>
</dbReference>
<dbReference type="PANTHER" id="PTHR13691:SF5">
    <property type="entry name" value="LARGE RIBOSOMAL SUBUNIT PROTEIN UL2M"/>
    <property type="match status" value="1"/>
</dbReference>
<dbReference type="PANTHER" id="PTHR13691">
    <property type="entry name" value="RIBOSOMAL PROTEIN L2"/>
    <property type="match status" value="1"/>
</dbReference>
<dbReference type="Pfam" id="PF00181">
    <property type="entry name" value="Ribosomal_L2"/>
    <property type="match status" value="1"/>
</dbReference>
<dbReference type="Pfam" id="PF03947">
    <property type="entry name" value="Ribosomal_L2_C"/>
    <property type="match status" value="1"/>
</dbReference>
<dbReference type="PIRSF" id="PIRSF002158">
    <property type="entry name" value="Ribosomal_L2"/>
    <property type="match status" value="1"/>
</dbReference>
<dbReference type="SMART" id="SM01383">
    <property type="entry name" value="Ribosomal_L2"/>
    <property type="match status" value="1"/>
</dbReference>
<dbReference type="SMART" id="SM01382">
    <property type="entry name" value="Ribosomal_L2_C"/>
    <property type="match status" value="1"/>
</dbReference>
<dbReference type="SUPFAM" id="SSF50249">
    <property type="entry name" value="Nucleic acid-binding proteins"/>
    <property type="match status" value="1"/>
</dbReference>
<dbReference type="SUPFAM" id="SSF50104">
    <property type="entry name" value="Translation proteins SH3-like domain"/>
    <property type="match status" value="1"/>
</dbReference>
<dbReference type="PROSITE" id="PS00467">
    <property type="entry name" value="RIBOSOMAL_L2"/>
    <property type="match status" value="1"/>
</dbReference>
<gene>
    <name evidence="1" type="primary">rplB</name>
    <name type="ordered locus">LBF_1910</name>
</gene>
<comment type="function">
    <text evidence="1">One of the primary rRNA binding proteins. Required for association of the 30S and 50S subunits to form the 70S ribosome, for tRNA binding and peptide bond formation. It has been suggested to have peptidyltransferase activity; this is somewhat controversial. Makes several contacts with the 16S rRNA in the 70S ribosome.</text>
</comment>
<comment type="subunit">
    <text evidence="1">Part of the 50S ribosomal subunit. Forms a bridge to the 30S subunit in the 70S ribosome.</text>
</comment>
<comment type="similarity">
    <text evidence="1">Belongs to the universal ribosomal protein uL2 family.</text>
</comment>
<name>RL2_LEPBA</name>
<organism>
    <name type="scientific">Leptospira biflexa serovar Patoc (strain Patoc 1 / Ames)</name>
    <dbReference type="NCBI Taxonomy" id="355278"/>
    <lineage>
        <taxon>Bacteria</taxon>
        <taxon>Pseudomonadati</taxon>
        <taxon>Spirochaetota</taxon>
        <taxon>Spirochaetia</taxon>
        <taxon>Leptospirales</taxon>
        <taxon>Leptospiraceae</taxon>
        <taxon>Leptospira</taxon>
    </lineage>
</organism>
<feature type="chain" id="PRO_1000141572" description="Large ribosomal subunit protein uL2">
    <location>
        <begin position="1"/>
        <end position="278"/>
    </location>
</feature>
<feature type="region of interest" description="Disordered" evidence="2">
    <location>
        <begin position="224"/>
        <end position="262"/>
    </location>
</feature>
<reference key="1">
    <citation type="journal article" date="2008" name="PLoS ONE">
        <title>Genome sequence of the saprophyte Leptospira biflexa provides insights into the evolution of Leptospira and the pathogenesis of leptospirosis.</title>
        <authorList>
            <person name="Picardeau M."/>
            <person name="Bulach D.M."/>
            <person name="Bouchier C."/>
            <person name="Zuerner R.L."/>
            <person name="Zidane N."/>
            <person name="Wilson P.J."/>
            <person name="Creno S."/>
            <person name="Kuczek E.S."/>
            <person name="Bommezzadri S."/>
            <person name="Davis J.C."/>
            <person name="McGrath A."/>
            <person name="Johnson M.J."/>
            <person name="Boursaux-Eude C."/>
            <person name="Seemann T."/>
            <person name="Rouy Z."/>
            <person name="Coppel R.L."/>
            <person name="Rood J.I."/>
            <person name="Lajus A."/>
            <person name="Davies J.K."/>
            <person name="Medigue C."/>
            <person name="Adler B."/>
        </authorList>
    </citation>
    <scope>NUCLEOTIDE SEQUENCE [LARGE SCALE GENOMIC DNA]</scope>
    <source>
        <strain>Patoc 1 / Ames</strain>
    </source>
</reference>
<sequence>MGIRKLKPTTQSSRYYSVLDFKEITEVVPYKPLTANISYKAGRDNKGRIAVRRKGGRNKRKFRIIDFKRNKFGIPATVKTIEYDPNRSAFIALVCYADGEYRYILAPNGLKVGDKIESGPAAEIKLGNTLPLDKIPAGTNVHNIELHIGKGGQIARTAGSFAVISAKDGDYVSLKLPSSEIRKVRKECLATIGELSNKDHNLVIIGKAGRNRWLGKRPKVRGVVMNPVDHPLGGGEGRTSGGRHPVTPWGKPTKGFKTRKTRPSDRFIVQRRKKNRNR</sequence>
<protein>
    <recommendedName>
        <fullName evidence="1">Large ribosomal subunit protein uL2</fullName>
    </recommendedName>
    <alternativeName>
        <fullName evidence="3">50S ribosomal protein L2</fullName>
    </alternativeName>
</protein>
<keyword id="KW-0687">Ribonucleoprotein</keyword>
<keyword id="KW-0689">Ribosomal protein</keyword>
<keyword id="KW-0694">RNA-binding</keyword>
<keyword id="KW-0699">rRNA-binding</keyword>
<evidence type="ECO:0000255" key="1">
    <source>
        <dbReference type="HAMAP-Rule" id="MF_01320"/>
    </source>
</evidence>
<evidence type="ECO:0000256" key="2">
    <source>
        <dbReference type="SAM" id="MobiDB-lite"/>
    </source>
</evidence>
<evidence type="ECO:0000305" key="3"/>